<evidence type="ECO:0000250" key="1"/>
<evidence type="ECO:0000255" key="2"/>
<evidence type="ECO:0000255" key="3">
    <source>
        <dbReference type="PROSITE-ProRule" id="PRU00276"/>
    </source>
</evidence>
<evidence type="ECO:0000255" key="4">
    <source>
        <dbReference type="PROSITE-ProRule" id="PRU10095"/>
    </source>
</evidence>
<evidence type="ECO:0000305" key="5"/>
<sequence>FPYQGSSIILESGNVNDYEVVYPRKVTALPKGAVQQKYEDAMQYEFKVNGEPVVLHLEKNKGLFSKDYSEIHYSPDGRRITTHPLVEDHCYYRGHIRNDADSTASISACNGLKGHFKLRGETYLIEPMKISNSEAHAVYKYENVEKEDEAHKMCGVTQNWESYEPIKKASQLIVSTEFQRYMEIVIVVDHSMYTKYKGDSDKIKAWVYEMINTISESYRYLYIDIIVSALEMWSEKDLINVETSAENTLKSFGEWRAKDLIHRISHDNAQLLTATDFDGPTIGLAYVASMCDPKRSVGVVQDHSSVNHLVAITLAHEIAHNLGVHHDEGSCSCGSGYTCIMSPVINSEVIKYFSDCSYIQCREYISKENPPCILNKPLRTDTVSTPVSGNELLEAGKDYD</sequence>
<organism>
    <name type="scientific">Deinagkistrodon acutus</name>
    <name type="common">Hundred-pace snake</name>
    <name type="synonym">Agkistrodon acutus</name>
    <dbReference type="NCBI Taxonomy" id="36307"/>
    <lineage>
        <taxon>Eukaryota</taxon>
        <taxon>Metazoa</taxon>
        <taxon>Chordata</taxon>
        <taxon>Craniata</taxon>
        <taxon>Vertebrata</taxon>
        <taxon>Euteleostomi</taxon>
        <taxon>Lepidosauria</taxon>
        <taxon>Squamata</taxon>
        <taxon>Bifurcata</taxon>
        <taxon>Unidentata</taxon>
        <taxon>Episquamata</taxon>
        <taxon>Toxicofera</taxon>
        <taxon>Serpentes</taxon>
        <taxon>Colubroidea</taxon>
        <taxon>Viperidae</taxon>
        <taxon>Crotalinae</taxon>
        <taxon>Deinagkistrodon</taxon>
    </lineage>
</organism>
<proteinExistence type="evidence at transcript level"/>
<accession>Q9IAY3</accession>
<protein>
    <recommendedName>
        <fullName>Snake venom metalloproteinase H1</fullName>
        <shortName>SVMP</shortName>
        <ecNumber>3.4.24.-</ecNumber>
    </recommendedName>
</protein>
<comment type="function">
    <text evidence="1">Snake venom metalloproteinase that impairs hemostasis in the envenomed animal.</text>
</comment>
<comment type="cofactor">
    <cofactor evidence="1">
        <name>Zn(2+)</name>
        <dbReference type="ChEBI" id="CHEBI:29105"/>
    </cofactor>
    <text evidence="1">Binds 1 zinc ion per subunit.</text>
</comment>
<comment type="subunit">
    <text evidence="1">Monomer.</text>
</comment>
<comment type="subcellular location">
    <subcellularLocation>
        <location evidence="1">Secreted</location>
    </subcellularLocation>
</comment>
<comment type="tissue specificity">
    <text>Expressed by the venom gland.</text>
</comment>
<comment type="similarity">
    <text evidence="5">Belongs to the venom metalloproteinase (M12B) family. P-I subfamily.</text>
</comment>
<dbReference type="EC" id="3.4.24.-"/>
<dbReference type="EMBL" id="AF098309">
    <property type="protein sequence ID" value="AAF61184.1"/>
    <property type="molecule type" value="mRNA"/>
</dbReference>
<dbReference type="SMR" id="Q9IAY3"/>
<dbReference type="MEROPS" id="M12.131"/>
<dbReference type="GO" id="GO:0005576">
    <property type="term" value="C:extracellular region"/>
    <property type="evidence" value="ECO:0007669"/>
    <property type="project" value="UniProtKB-SubCell"/>
</dbReference>
<dbReference type="GO" id="GO:0005886">
    <property type="term" value="C:plasma membrane"/>
    <property type="evidence" value="ECO:0007669"/>
    <property type="project" value="TreeGrafter"/>
</dbReference>
<dbReference type="GO" id="GO:0046872">
    <property type="term" value="F:metal ion binding"/>
    <property type="evidence" value="ECO:0007669"/>
    <property type="project" value="UniProtKB-KW"/>
</dbReference>
<dbReference type="GO" id="GO:0004222">
    <property type="term" value="F:metalloendopeptidase activity"/>
    <property type="evidence" value="ECO:0007669"/>
    <property type="project" value="InterPro"/>
</dbReference>
<dbReference type="GO" id="GO:0090729">
    <property type="term" value="F:toxin activity"/>
    <property type="evidence" value="ECO:0007669"/>
    <property type="project" value="UniProtKB-KW"/>
</dbReference>
<dbReference type="GO" id="GO:0006508">
    <property type="term" value="P:proteolysis"/>
    <property type="evidence" value="ECO:0007669"/>
    <property type="project" value="UniProtKB-KW"/>
</dbReference>
<dbReference type="CDD" id="cd04269">
    <property type="entry name" value="ZnMc_adamalysin_II_like"/>
    <property type="match status" value="1"/>
</dbReference>
<dbReference type="FunFam" id="3.40.390.10:FF:000002">
    <property type="entry name" value="Disintegrin and metalloproteinase domain-containing protein 22"/>
    <property type="match status" value="1"/>
</dbReference>
<dbReference type="Gene3D" id="3.40.390.10">
    <property type="entry name" value="Collagenase (Catalytic Domain)"/>
    <property type="match status" value="1"/>
</dbReference>
<dbReference type="InterPro" id="IPR024079">
    <property type="entry name" value="MetalloPept_cat_dom_sf"/>
</dbReference>
<dbReference type="InterPro" id="IPR001590">
    <property type="entry name" value="Peptidase_M12B"/>
</dbReference>
<dbReference type="InterPro" id="IPR002870">
    <property type="entry name" value="Peptidase_M12B_N"/>
</dbReference>
<dbReference type="InterPro" id="IPR034027">
    <property type="entry name" value="Reprolysin_adamalysin"/>
</dbReference>
<dbReference type="PANTHER" id="PTHR11905">
    <property type="entry name" value="ADAM A DISINTEGRIN AND METALLOPROTEASE DOMAIN"/>
    <property type="match status" value="1"/>
</dbReference>
<dbReference type="PANTHER" id="PTHR11905:SF32">
    <property type="entry name" value="DISINTEGRIN AND METALLOPROTEINASE DOMAIN-CONTAINING PROTEIN 28"/>
    <property type="match status" value="1"/>
</dbReference>
<dbReference type="Pfam" id="PF01562">
    <property type="entry name" value="Pep_M12B_propep"/>
    <property type="match status" value="1"/>
</dbReference>
<dbReference type="Pfam" id="PF01421">
    <property type="entry name" value="Reprolysin"/>
    <property type="match status" value="1"/>
</dbReference>
<dbReference type="SUPFAM" id="SSF55486">
    <property type="entry name" value="Metalloproteases ('zincins'), catalytic domain"/>
    <property type="match status" value="1"/>
</dbReference>
<dbReference type="PROSITE" id="PS50215">
    <property type="entry name" value="ADAM_MEPRO"/>
    <property type="match status" value="1"/>
</dbReference>
<dbReference type="PROSITE" id="PS00142">
    <property type="entry name" value="ZINC_PROTEASE"/>
    <property type="match status" value="1"/>
</dbReference>
<feature type="signal peptide" evidence="2">
    <location>
        <begin position="1" status="less than"/>
        <end position="6"/>
    </location>
</feature>
<feature type="propeptide" id="PRO_0000322615" evidence="1">
    <location>
        <begin position="7"/>
        <end position="176"/>
    </location>
</feature>
<feature type="chain" id="PRO_5000055235" description="Snake venom metalloproteinase H1">
    <location>
        <begin position="177"/>
        <end position="377"/>
    </location>
</feature>
<feature type="propeptide" id="PRO_0000322616" evidence="1">
    <location>
        <begin position="378"/>
        <end position="400"/>
    </location>
</feature>
<feature type="domain" description="Peptidase M12B" evidence="3">
    <location>
        <begin position="180"/>
        <end position="377"/>
    </location>
</feature>
<feature type="active site" evidence="3 4">
    <location>
        <position position="317"/>
    </location>
</feature>
<feature type="binding site" evidence="1">
    <location>
        <position position="183"/>
    </location>
    <ligand>
        <name>Ca(2+)</name>
        <dbReference type="ChEBI" id="CHEBI:29108"/>
        <label>1</label>
    </ligand>
</feature>
<feature type="binding site" evidence="1">
    <location>
        <position position="267"/>
    </location>
    <ligand>
        <name>Ca(2+)</name>
        <dbReference type="ChEBI" id="CHEBI:29108"/>
        <label>1</label>
    </ligand>
</feature>
<feature type="binding site" evidence="1">
    <location>
        <position position="316"/>
    </location>
    <ligand>
        <name>Zn(2+)</name>
        <dbReference type="ChEBI" id="CHEBI:29105"/>
        <note>catalytic</note>
    </ligand>
</feature>
<feature type="binding site" evidence="1">
    <location>
        <position position="320"/>
    </location>
    <ligand>
        <name>Zn(2+)</name>
        <dbReference type="ChEBI" id="CHEBI:29105"/>
        <note>catalytic</note>
    </ligand>
</feature>
<feature type="binding site" evidence="1">
    <location>
        <position position="326"/>
    </location>
    <ligand>
        <name>Zn(2+)</name>
        <dbReference type="ChEBI" id="CHEBI:29105"/>
        <note>catalytic</note>
    </ligand>
</feature>
<feature type="binding site" evidence="1">
    <location>
        <position position="372"/>
    </location>
    <ligand>
        <name>Ca(2+)</name>
        <dbReference type="ChEBI" id="CHEBI:29108"/>
        <label>1</label>
    </ligand>
</feature>
<feature type="binding site" evidence="1">
    <location>
        <position position="375"/>
    </location>
    <ligand>
        <name>Ca(2+)</name>
        <dbReference type="ChEBI" id="CHEBI:29108"/>
        <label>1</label>
    </ligand>
</feature>
<feature type="binding site" evidence="1">
    <location>
        <position position="387"/>
    </location>
    <ligand>
        <name>Ca(2+)</name>
        <dbReference type="ChEBI" id="CHEBI:29108"/>
        <label>2</label>
    </ligand>
</feature>
<feature type="binding site" evidence="1">
    <location>
        <position position="390"/>
    </location>
    <ligand>
        <name>Ca(2+)</name>
        <dbReference type="ChEBI" id="CHEBI:29108"/>
        <label>2</label>
    </ligand>
</feature>
<feature type="binding site" evidence="1">
    <location>
        <position position="392"/>
    </location>
    <ligand>
        <name>Ca(2+)</name>
        <dbReference type="ChEBI" id="CHEBI:29108"/>
        <label>2</label>
    </ligand>
</feature>
<feature type="binding site" evidence="1">
    <location>
        <position position="394"/>
    </location>
    <ligand>
        <name>Ca(2+)</name>
        <dbReference type="ChEBI" id="CHEBI:29108"/>
        <label>2</label>
    </ligand>
</feature>
<feature type="binding site" evidence="1">
    <location>
        <position position="400"/>
    </location>
    <ligand>
        <name>Ca(2+)</name>
        <dbReference type="ChEBI" id="CHEBI:29108"/>
        <label>2</label>
    </ligand>
</feature>
<feature type="disulfide bond" evidence="3">
    <location>
        <begin position="291"/>
        <end position="372"/>
    </location>
</feature>
<feature type="disulfide bond" evidence="3">
    <location>
        <begin position="331"/>
        <end position="356"/>
    </location>
</feature>
<feature type="disulfide bond" evidence="3">
    <location>
        <begin position="333"/>
        <end position="339"/>
    </location>
</feature>
<feature type="non-terminal residue">
    <location>
        <position position="1"/>
    </location>
</feature>
<keyword id="KW-0106">Calcium</keyword>
<keyword id="KW-1015">Disulfide bond</keyword>
<keyword id="KW-1199">Hemostasis impairing toxin</keyword>
<keyword id="KW-0378">Hydrolase</keyword>
<keyword id="KW-0479">Metal-binding</keyword>
<keyword id="KW-0482">Metalloprotease</keyword>
<keyword id="KW-0645">Protease</keyword>
<keyword id="KW-0964">Secreted</keyword>
<keyword id="KW-0732">Signal</keyword>
<keyword id="KW-0800">Toxin</keyword>
<keyword id="KW-0862">Zinc</keyword>
<keyword id="KW-0865">Zymogen</keyword>
<reference key="1">
    <citation type="journal article" date="2000" name="Eur. J. Biochem.">
        <title>Purification, cloning and sequence analyses for pro-metalloprotease-disintegrin variants from Deinagkistrodon acutus venom and subclassification of the small venom metalloproteases.</title>
        <authorList>
            <person name="Tsai I.-H."/>
            <person name="Wang Y.-M."/>
            <person name="Chiang T.-Y."/>
            <person name="Chen Y.-L."/>
            <person name="Huang R.-J."/>
        </authorList>
    </citation>
    <scope>NUCLEOTIDE SEQUENCE [MRNA]</scope>
    <source>
        <tissue>Venom gland</tissue>
    </source>
</reference>
<name>VM1H1_DEIAC</name>